<sequence length="95" mass="10141">MNIRPLGDRVVIKRVEAEETTKSGIVLPGAAKEKPQVAEVIAVGPGGLVDGKEVKMELKVGDKVLFSKYAGNEVKIEGEEVTILKQDDILAVVEG</sequence>
<protein>
    <recommendedName>
        <fullName evidence="1">Co-chaperonin GroES</fullName>
    </recommendedName>
    <alternativeName>
        <fullName evidence="1">10 kDa chaperonin</fullName>
    </alternativeName>
    <alternativeName>
        <fullName evidence="1">Chaperonin-10</fullName>
        <shortName evidence="1">Cpn10</shortName>
    </alternativeName>
</protein>
<dbReference type="EMBL" id="CP000726">
    <property type="protein sequence ID" value="ABS32786.1"/>
    <property type="molecule type" value="Genomic_DNA"/>
</dbReference>
<dbReference type="RefSeq" id="WP_003357350.1">
    <property type="nucleotide sequence ID" value="NC_009697.1"/>
</dbReference>
<dbReference type="SMR" id="A7FYP4"/>
<dbReference type="KEGG" id="cba:CLB_3355"/>
<dbReference type="HOGENOM" id="CLU_132825_2_0_9"/>
<dbReference type="GO" id="GO:0005737">
    <property type="term" value="C:cytoplasm"/>
    <property type="evidence" value="ECO:0007669"/>
    <property type="project" value="UniProtKB-SubCell"/>
</dbReference>
<dbReference type="GO" id="GO:0005524">
    <property type="term" value="F:ATP binding"/>
    <property type="evidence" value="ECO:0007669"/>
    <property type="project" value="InterPro"/>
</dbReference>
<dbReference type="GO" id="GO:0046872">
    <property type="term" value="F:metal ion binding"/>
    <property type="evidence" value="ECO:0007669"/>
    <property type="project" value="TreeGrafter"/>
</dbReference>
<dbReference type="GO" id="GO:0044183">
    <property type="term" value="F:protein folding chaperone"/>
    <property type="evidence" value="ECO:0007669"/>
    <property type="project" value="InterPro"/>
</dbReference>
<dbReference type="GO" id="GO:0051087">
    <property type="term" value="F:protein-folding chaperone binding"/>
    <property type="evidence" value="ECO:0007669"/>
    <property type="project" value="TreeGrafter"/>
</dbReference>
<dbReference type="GO" id="GO:0051082">
    <property type="term" value="F:unfolded protein binding"/>
    <property type="evidence" value="ECO:0007669"/>
    <property type="project" value="TreeGrafter"/>
</dbReference>
<dbReference type="GO" id="GO:0051085">
    <property type="term" value="P:chaperone cofactor-dependent protein refolding"/>
    <property type="evidence" value="ECO:0007669"/>
    <property type="project" value="TreeGrafter"/>
</dbReference>
<dbReference type="CDD" id="cd00320">
    <property type="entry name" value="cpn10"/>
    <property type="match status" value="1"/>
</dbReference>
<dbReference type="FunFam" id="2.30.33.40:FF:000001">
    <property type="entry name" value="10 kDa chaperonin"/>
    <property type="match status" value="1"/>
</dbReference>
<dbReference type="Gene3D" id="2.30.33.40">
    <property type="entry name" value="GroES chaperonin"/>
    <property type="match status" value="1"/>
</dbReference>
<dbReference type="HAMAP" id="MF_00580">
    <property type="entry name" value="CH10"/>
    <property type="match status" value="1"/>
</dbReference>
<dbReference type="InterPro" id="IPR020818">
    <property type="entry name" value="Chaperonin_GroES"/>
</dbReference>
<dbReference type="InterPro" id="IPR037124">
    <property type="entry name" value="Chaperonin_GroES_sf"/>
</dbReference>
<dbReference type="InterPro" id="IPR018369">
    <property type="entry name" value="Chaprnonin_Cpn10_CS"/>
</dbReference>
<dbReference type="InterPro" id="IPR011032">
    <property type="entry name" value="GroES-like_sf"/>
</dbReference>
<dbReference type="NCBIfam" id="NF001527">
    <property type="entry name" value="PRK00364.1-2"/>
    <property type="match status" value="1"/>
</dbReference>
<dbReference type="NCBIfam" id="NF001531">
    <property type="entry name" value="PRK00364.2-2"/>
    <property type="match status" value="1"/>
</dbReference>
<dbReference type="NCBIfam" id="NF001533">
    <property type="entry name" value="PRK00364.2-4"/>
    <property type="match status" value="1"/>
</dbReference>
<dbReference type="PANTHER" id="PTHR10772">
    <property type="entry name" value="10 KDA HEAT SHOCK PROTEIN"/>
    <property type="match status" value="1"/>
</dbReference>
<dbReference type="PANTHER" id="PTHR10772:SF58">
    <property type="entry name" value="CO-CHAPERONIN GROES"/>
    <property type="match status" value="1"/>
</dbReference>
<dbReference type="Pfam" id="PF00166">
    <property type="entry name" value="Cpn10"/>
    <property type="match status" value="1"/>
</dbReference>
<dbReference type="PRINTS" id="PR00297">
    <property type="entry name" value="CHAPERONIN10"/>
</dbReference>
<dbReference type="SMART" id="SM00883">
    <property type="entry name" value="Cpn10"/>
    <property type="match status" value="1"/>
</dbReference>
<dbReference type="SUPFAM" id="SSF50129">
    <property type="entry name" value="GroES-like"/>
    <property type="match status" value="1"/>
</dbReference>
<dbReference type="PROSITE" id="PS00681">
    <property type="entry name" value="CHAPERONINS_CPN10"/>
    <property type="match status" value="1"/>
</dbReference>
<organism>
    <name type="scientific">Clostridium botulinum (strain ATCC 19397 / Type A)</name>
    <dbReference type="NCBI Taxonomy" id="441770"/>
    <lineage>
        <taxon>Bacteria</taxon>
        <taxon>Bacillati</taxon>
        <taxon>Bacillota</taxon>
        <taxon>Clostridia</taxon>
        <taxon>Eubacteriales</taxon>
        <taxon>Clostridiaceae</taxon>
        <taxon>Clostridium</taxon>
    </lineage>
</organism>
<evidence type="ECO:0000255" key="1">
    <source>
        <dbReference type="HAMAP-Rule" id="MF_00580"/>
    </source>
</evidence>
<keyword id="KW-0143">Chaperone</keyword>
<keyword id="KW-0963">Cytoplasm</keyword>
<feature type="chain" id="PRO_1000025236" description="Co-chaperonin GroES">
    <location>
        <begin position="1"/>
        <end position="95"/>
    </location>
</feature>
<gene>
    <name evidence="1" type="primary">groES</name>
    <name evidence="1" type="synonym">groS</name>
    <name type="ordered locus">CLB_3355</name>
</gene>
<accession>A7FYP4</accession>
<name>CH10_CLOB1</name>
<comment type="function">
    <text evidence="1">Together with the chaperonin GroEL, plays an essential role in assisting protein folding. The GroEL-GroES system forms a nano-cage that allows encapsulation of the non-native substrate proteins and provides a physical environment optimized to promote and accelerate protein folding. GroES binds to the apical surface of the GroEL ring, thereby capping the opening of the GroEL channel.</text>
</comment>
<comment type="subunit">
    <text evidence="1">Heptamer of 7 subunits arranged in a ring. Interacts with the chaperonin GroEL.</text>
</comment>
<comment type="subcellular location">
    <subcellularLocation>
        <location evidence="1">Cytoplasm</location>
    </subcellularLocation>
</comment>
<comment type="similarity">
    <text evidence="1">Belongs to the GroES chaperonin family.</text>
</comment>
<proteinExistence type="inferred from homology"/>
<reference key="1">
    <citation type="journal article" date="2007" name="PLoS ONE">
        <title>Analysis of the neurotoxin complex genes in Clostridium botulinum A1-A4 and B1 strains: BoNT/A3, /Ba4 and /B1 clusters are located within plasmids.</title>
        <authorList>
            <person name="Smith T.J."/>
            <person name="Hill K.K."/>
            <person name="Foley B.T."/>
            <person name="Detter J.C."/>
            <person name="Munk A.C."/>
            <person name="Bruce D.C."/>
            <person name="Doggett N.A."/>
            <person name="Smith L.A."/>
            <person name="Marks J.D."/>
            <person name="Xie G."/>
            <person name="Brettin T.S."/>
        </authorList>
    </citation>
    <scope>NUCLEOTIDE SEQUENCE [LARGE SCALE GENOMIC DNA]</scope>
    <source>
        <strain>ATCC 19397 / Type A</strain>
    </source>
</reference>